<keyword id="KW-0997">Cell inner membrane</keyword>
<keyword id="KW-1003">Cell membrane</keyword>
<keyword id="KW-0472">Membrane</keyword>
<keyword id="KW-0520">NAD</keyword>
<keyword id="KW-0560">Oxidoreductase</keyword>
<evidence type="ECO:0000255" key="1">
    <source>
        <dbReference type="HAMAP-Rule" id="MF_01415"/>
    </source>
</evidence>
<accession>B5F8H0</accession>
<feature type="chain" id="PRO_1000145581" description="Glutathione-regulated potassium-efflux system ancillary protein KefG">
    <location>
        <begin position="1"/>
        <end position="183"/>
    </location>
</feature>
<dbReference type="EC" id="1.6.5.2" evidence="1"/>
<dbReference type="EMBL" id="CP001138">
    <property type="protein sequence ID" value="ACH52497.1"/>
    <property type="molecule type" value="Genomic_DNA"/>
</dbReference>
<dbReference type="RefSeq" id="WP_000081820.1">
    <property type="nucleotide sequence ID" value="NC_011149.1"/>
</dbReference>
<dbReference type="SMR" id="B5F8H0"/>
<dbReference type="KEGG" id="sea:SeAg_B3655"/>
<dbReference type="HOGENOM" id="CLU_058643_0_1_6"/>
<dbReference type="Proteomes" id="UP000008819">
    <property type="component" value="Chromosome"/>
</dbReference>
<dbReference type="GO" id="GO:0005886">
    <property type="term" value="C:plasma membrane"/>
    <property type="evidence" value="ECO:0007669"/>
    <property type="project" value="UniProtKB-SubCell"/>
</dbReference>
<dbReference type="GO" id="GO:0009055">
    <property type="term" value="F:electron transfer activity"/>
    <property type="evidence" value="ECO:0007669"/>
    <property type="project" value="TreeGrafter"/>
</dbReference>
<dbReference type="GO" id="GO:0010181">
    <property type="term" value="F:FMN binding"/>
    <property type="evidence" value="ECO:0007669"/>
    <property type="project" value="TreeGrafter"/>
</dbReference>
<dbReference type="GO" id="GO:0050136">
    <property type="term" value="F:NADH:ubiquinone reductase (non-electrogenic) activity"/>
    <property type="evidence" value="ECO:0007669"/>
    <property type="project" value="RHEA"/>
</dbReference>
<dbReference type="GO" id="GO:0008753">
    <property type="term" value="F:NADPH dehydrogenase (quinone) activity"/>
    <property type="evidence" value="ECO:0007669"/>
    <property type="project" value="RHEA"/>
</dbReference>
<dbReference type="GO" id="GO:1901381">
    <property type="term" value="P:positive regulation of potassium ion transmembrane transport"/>
    <property type="evidence" value="ECO:0007669"/>
    <property type="project" value="UniProtKB-UniRule"/>
</dbReference>
<dbReference type="GO" id="GO:0006813">
    <property type="term" value="P:potassium ion transport"/>
    <property type="evidence" value="ECO:0007669"/>
    <property type="project" value="InterPro"/>
</dbReference>
<dbReference type="FunFam" id="3.40.50.360:FF:000013">
    <property type="entry name" value="Glutathione-regulated potassium-efflux system ancillary protein KefG"/>
    <property type="match status" value="1"/>
</dbReference>
<dbReference type="Gene3D" id="3.40.50.360">
    <property type="match status" value="1"/>
</dbReference>
<dbReference type="HAMAP" id="MF_01415">
    <property type="entry name" value="K_H_efflux_KefG"/>
    <property type="match status" value="1"/>
</dbReference>
<dbReference type="InterPro" id="IPR003680">
    <property type="entry name" value="Flavodoxin_fold"/>
</dbReference>
<dbReference type="InterPro" id="IPR029039">
    <property type="entry name" value="Flavoprotein-like_sf"/>
</dbReference>
<dbReference type="InterPro" id="IPR023947">
    <property type="entry name" value="K_H_efflux_KefG"/>
</dbReference>
<dbReference type="InterPro" id="IPR046980">
    <property type="entry name" value="KefG/KefF"/>
</dbReference>
<dbReference type="NCBIfam" id="NF003430">
    <property type="entry name" value="PRK04930.1"/>
    <property type="match status" value="1"/>
</dbReference>
<dbReference type="PANTHER" id="PTHR47307">
    <property type="entry name" value="GLUTATHIONE-REGULATED POTASSIUM-EFFLUX SYSTEM ANCILLARY PROTEIN KEFG"/>
    <property type="match status" value="1"/>
</dbReference>
<dbReference type="PANTHER" id="PTHR47307:SF1">
    <property type="entry name" value="GLUTATHIONE-REGULATED POTASSIUM-EFFLUX SYSTEM ANCILLARY PROTEIN KEFG"/>
    <property type="match status" value="1"/>
</dbReference>
<dbReference type="Pfam" id="PF02525">
    <property type="entry name" value="Flavodoxin_2"/>
    <property type="match status" value="1"/>
</dbReference>
<dbReference type="SUPFAM" id="SSF52218">
    <property type="entry name" value="Flavoproteins"/>
    <property type="match status" value="1"/>
</dbReference>
<protein>
    <recommendedName>
        <fullName evidence="1">Glutathione-regulated potassium-efflux system ancillary protein KefG</fullName>
    </recommendedName>
    <alternativeName>
        <fullName evidence="1">Putative quinone oxidoreductase KefG</fullName>
        <ecNumber evidence="1">1.6.5.2</ecNumber>
    </alternativeName>
</protein>
<name>KEFG_SALA4</name>
<reference key="1">
    <citation type="journal article" date="2011" name="J. Bacteriol.">
        <title>Comparative genomics of 28 Salmonella enterica isolates: evidence for CRISPR-mediated adaptive sublineage evolution.</title>
        <authorList>
            <person name="Fricke W.F."/>
            <person name="Mammel M.K."/>
            <person name="McDermott P.F."/>
            <person name="Tartera C."/>
            <person name="White D.G."/>
            <person name="Leclerc J.E."/>
            <person name="Ravel J."/>
            <person name="Cebula T.A."/>
        </authorList>
    </citation>
    <scope>NUCLEOTIDE SEQUENCE [LARGE SCALE GENOMIC DNA]</scope>
    <source>
        <strain>SL483</strain>
    </source>
</reference>
<sequence>MSQPAKVLLLYAHPESQDSVANRVLLKPAIQHNNVTVHDLYARYPDFFIDTPYEQALLREHDVIVFQHPLYTYSCPALLKEWLDRVLSRGFASGPGGNQLVGKYWRSVITTGEPESAYRYDALNRYPMSDVLRPFELTAAMCRMHWMPPIIVYWARRQSPQTLASHAKAYGEWLANPVSAGGY</sequence>
<organism>
    <name type="scientific">Salmonella agona (strain SL483)</name>
    <dbReference type="NCBI Taxonomy" id="454166"/>
    <lineage>
        <taxon>Bacteria</taxon>
        <taxon>Pseudomonadati</taxon>
        <taxon>Pseudomonadota</taxon>
        <taxon>Gammaproteobacteria</taxon>
        <taxon>Enterobacterales</taxon>
        <taxon>Enterobacteriaceae</taxon>
        <taxon>Salmonella</taxon>
    </lineage>
</organism>
<comment type="function">
    <text evidence="1">Regulatory subunit of a potassium efflux system that confers protection against electrophiles. Required for full activity of KefB.</text>
</comment>
<comment type="catalytic activity">
    <reaction evidence="1">
        <text>a quinone + NADH + H(+) = a quinol + NAD(+)</text>
        <dbReference type="Rhea" id="RHEA:46160"/>
        <dbReference type="ChEBI" id="CHEBI:15378"/>
        <dbReference type="ChEBI" id="CHEBI:24646"/>
        <dbReference type="ChEBI" id="CHEBI:57540"/>
        <dbReference type="ChEBI" id="CHEBI:57945"/>
        <dbReference type="ChEBI" id="CHEBI:132124"/>
        <dbReference type="EC" id="1.6.5.2"/>
    </reaction>
</comment>
<comment type="catalytic activity">
    <reaction evidence="1">
        <text>a quinone + NADPH + H(+) = a quinol + NADP(+)</text>
        <dbReference type="Rhea" id="RHEA:46164"/>
        <dbReference type="ChEBI" id="CHEBI:15378"/>
        <dbReference type="ChEBI" id="CHEBI:24646"/>
        <dbReference type="ChEBI" id="CHEBI:57783"/>
        <dbReference type="ChEBI" id="CHEBI:58349"/>
        <dbReference type="ChEBI" id="CHEBI:132124"/>
        <dbReference type="EC" id="1.6.5.2"/>
    </reaction>
</comment>
<comment type="subunit">
    <text evidence="1">Interacts with KefB.</text>
</comment>
<comment type="subcellular location">
    <subcellularLocation>
        <location evidence="1">Cell inner membrane</location>
        <topology evidence="1">Peripheral membrane protein</topology>
        <orientation evidence="1">Cytoplasmic side</orientation>
    </subcellularLocation>
</comment>
<comment type="similarity">
    <text evidence="1">Belongs to the NAD(P)H dehydrogenase (quinone) family. KefG subfamily.</text>
</comment>
<proteinExistence type="inferred from homology"/>
<gene>
    <name evidence="1" type="primary">kefG</name>
    <name type="ordered locus">SeAg_B3655</name>
</gene>